<name>CBAR1_HUMAN</name>
<comment type="function">
    <text evidence="1 5 6 7">Plays a critical role in regulating mitochondrial ultrastructure and function by maintaining the integrity of mitochondrial morphology, particularly the organization of cristae (PubMed:30404948). Preferentially binds to negatively charged phospholipids like cardiolipin and phosphatidylinositol 4,5-bisphosphate enhancing its interaction with mitochondrial membranes (PubMed:30404948). Induces membrane curvature and tubulation, which are critical for maintaining mitochondrial ultrastructure and the organization of cristae (PubMed:30404948). Plays a crucial role in ciliogenesis (PubMed:27528616, PubMed:30395363). May play a role in limb development through its role in ciliogenesis (PubMed:30395363). Plays a key role in the correct positioning of the annulus, a septin-based ring structure in the sperm flagellum, serving both as a physical barrier and a membrane diffusion barrier that separates the midpiece (MP) from the principal piece (PP) (By similarity). This positioning is essential for proper sperm motility and function (By similarity). Interacts with CBY3 to form a complex which localizes to the curved membrane region of the flagellar pocket (By similarity). By doing so, may provide stability and rigidity to the periannular membrane to prevent membrane deformation (By similarity). This function is crucial for halting annulus migration at the proximal end of the fibrous sheath-containing PP (By similarity).</text>
</comment>
<comment type="subunit">
    <text evidence="5 6 8">Homodimer (via BAR-like domain) (PubMed:27528616, PubMed:30395363). Heterodimer with FAM92B (via BAR-like domains) (PubMed:27528616). Interacts (via BAR-like domain) with CBY1; this interaction is required for targeting FAM92A to centriole and cilium basal body (PubMed:27528616, PubMed:30395363). Interacts (via BAR-like domain) with CBY3; both proteins form a ninefold symmetric structure at the flagellar base; are recruited to the annulus in a mutually dependent manner and regulate annulus positionning (PubMed:38197861).</text>
</comment>
<comment type="interaction">
    <interactant intactId="EBI-2349888">
        <id>A1XBS5</id>
    </interactant>
    <interactant intactId="EBI-947308">
        <id>Q9Y3M2</id>
        <label>CBY1</label>
    </interactant>
    <organismsDiffer>false</organismsDiffer>
    <experiments>4</experiments>
</comment>
<comment type="interaction">
    <interactant intactId="EBI-12348777">
        <id>A1XBS5-3</id>
    </interactant>
    <interactant intactId="EBI-947308">
        <id>Q9Y3M2</id>
        <label>CBY1</label>
    </interactant>
    <organismsDiffer>false</organismsDiffer>
    <experiments>3</experiments>
</comment>
<comment type="interaction">
    <interactant intactId="EBI-12348777">
        <id>A1XBS5-3</id>
    </interactant>
    <interactant intactId="EBI-11524851">
        <id>Q8NA61-2</id>
        <label>CBY2</label>
    </interactant>
    <organismsDiffer>false</organismsDiffer>
    <experiments>3</experiments>
</comment>
<comment type="subcellular location">
    <subcellularLocation>
        <location evidence="5 7">Cytoplasm</location>
    </subcellularLocation>
    <subcellularLocation>
        <location evidence="5">Cytoplasm</location>
        <location evidence="5">Cytoskeleton</location>
        <location evidence="5">Microtubule organizing center</location>
        <location evidence="5">Centrosome</location>
        <location evidence="5">Centriole</location>
    </subcellularLocation>
    <subcellularLocation>
        <location evidence="5 6">Cytoplasm</location>
        <location evidence="5 6">Cytoskeleton</location>
        <location evidence="5 6">Cilium basal body</location>
    </subcellularLocation>
    <subcellularLocation>
        <location evidence="1">Cell projection</location>
        <location evidence="1">Cilium</location>
    </subcellularLocation>
    <subcellularLocation>
        <location evidence="7">Nucleus</location>
    </subcellularLocation>
    <subcellularLocation>
        <location evidence="7">Mitochondrion inner membrane</location>
        <topology evidence="7">Peripheral membrane protein</topology>
        <orientation evidence="7">Matrix side</orientation>
    </subcellularLocation>
    <subcellularLocation>
        <location evidence="1">Cell projection</location>
        <location evidence="1">Cilium</location>
        <location evidence="1">Flagellum</location>
    </subcellularLocation>
    <text evidence="1 5">Weak punctate vesicular distribution throughout the cytoplasm (PubMed:27528616). Localizes at the distal end of mother centrioles (PubMed:27528616). Extensive colocalization with CBY1 at mother centrioles (PubMed:27528616). Localizes to the annulus at the junction between the midpiece (MP) and principal piece (PP) of the sperm flagellum (By similarity).</text>
</comment>
<comment type="subcellular location">
    <molecule>Isoform 3</molecule>
    <subcellularLocation>
        <location evidence="4">Nucleus</location>
    </subcellularLocation>
</comment>
<comment type="alternative products">
    <event type="alternative splicing"/>
    <isoform>
        <id>A1XBS5-1</id>
        <name>1</name>
        <name evidence="11">FAM92A1-289</name>
        <sequence type="displayed"/>
    </isoform>
    <isoform>
        <id>A1XBS5-2</id>
        <name>2</name>
        <name evidence="11">FAM92A1-251</name>
        <sequence type="described" ref="VSP_025294"/>
    </isoform>
    <isoform>
        <id>A1XBS5-3</id>
        <name>3</name>
        <sequence type="described" ref="VSP_025296"/>
    </isoform>
    <isoform>
        <id>A1XBS5-4</id>
        <name>4</name>
        <sequence type="described" ref="VSP_025295"/>
    </isoform>
    <isoform>
        <id>A1XBS5-5</id>
        <name>5</name>
        <sequence type="described" ref="VSP_025292 VSP_025293"/>
    </isoform>
</comment>
<comment type="domain">
    <text evidence="14">The BAR-like domain displays limited similarity to other BAR domains.</text>
</comment>
<comment type="disease" evidence="6">
    <disease id="DI-05433">
        <name>Polydactyly, postaxial, A9</name>
        <acronym>PAPA9</acronym>
        <description>A form of postaxial polydactyly, a condition characterized by the occurrence of supernumerary digits in the upper and/or lower extremities. In postaxial polydactyly type A, the extra digit is well-formed and articulates with the fifth or a sixth metacarpal/metatarsal. PAPA9 is an autosomal recessive condition characterized by one or more posterior or postaxial digits.</description>
        <dbReference type="MIM" id="618219"/>
    </disease>
    <text>The disease may be caused by variants affecting the gene represented in this entry.</text>
</comment>
<comment type="similarity">
    <text evidence="13">Belongs to the CIBAR family.</text>
</comment>
<comment type="sequence caution" evidence="13">
    <conflict type="erroneous initiation">
        <sequence resource="EMBL-CDS" id="AAH14598"/>
    </conflict>
    <text>Extended N-terminus.</text>
</comment>
<comment type="sequence caution" evidence="13">
    <conflict type="erroneous initiation">
        <sequence resource="EMBL-CDS" id="AAI08708"/>
    </conflict>
    <text>Extended N-terminus.</text>
</comment>
<evidence type="ECO:0000250" key="1">
    <source>
        <dbReference type="UniProtKB" id="Q8BP22"/>
    </source>
</evidence>
<evidence type="ECO:0000255" key="2"/>
<evidence type="ECO:0000256" key="3">
    <source>
        <dbReference type="SAM" id="MobiDB-lite"/>
    </source>
</evidence>
<evidence type="ECO:0000269" key="4">
    <source>
    </source>
</evidence>
<evidence type="ECO:0000269" key="5">
    <source>
    </source>
</evidence>
<evidence type="ECO:0000269" key="6">
    <source>
    </source>
</evidence>
<evidence type="ECO:0000269" key="7">
    <source>
    </source>
</evidence>
<evidence type="ECO:0000269" key="8">
    <source>
    </source>
</evidence>
<evidence type="ECO:0000303" key="9">
    <source>
    </source>
</evidence>
<evidence type="ECO:0000303" key="10">
    <source>
    </source>
</evidence>
<evidence type="ECO:0000303" key="11">
    <source>
    </source>
</evidence>
<evidence type="ECO:0000303" key="12">
    <source>
    </source>
</evidence>
<evidence type="ECO:0000305" key="13"/>
<evidence type="ECO:0000305" key="14">
    <source>
    </source>
</evidence>
<evidence type="ECO:0000312" key="15">
    <source>
        <dbReference type="HGNC" id="HGNC:30452"/>
    </source>
</evidence>
<evidence type="ECO:0007829" key="16">
    <source>
        <dbReference type="PDB" id="8CEG"/>
    </source>
</evidence>
<keyword id="KW-0002">3D-structure</keyword>
<keyword id="KW-0025">Alternative splicing</keyword>
<keyword id="KW-0966">Cell projection</keyword>
<keyword id="KW-0969">Cilium</keyword>
<keyword id="KW-0970">Cilium biogenesis/degradation</keyword>
<keyword id="KW-0175">Coiled coil</keyword>
<keyword id="KW-0963">Cytoplasm</keyword>
<keyword id="KW-0206">Cytoskeleton</keyword>
<keyword id="KW-0221">Differentiation</keyword>
<keyword id="KW-0225">Disease variant</keyword>
<keyword id="KW-0282">Flagellum</keyword>
<keyword id="KW-0472">Membrane</keyword>
<keyword id="KW-0496">Mitochondrion</keyword>
<keyword id="KW-0999">Mitochondrion inner membrane</keyword>
<keyword id="KW-0539">Nucleus</keyword>
<keyword id="KW-1267">Proteomics identification</keyword>
<keyword id="KW-1185">Reference proteome</keyword>
<keyword id="KW-0744">Spermatogenesis</keyword>
<keyword id="KW-0809">Transit peptide</keyword>
<reference key="1">
    <citation type="journal article" date="2007" name="Mol. Cells">
        <title>Identification and characterization of two novel variants of the DUF1208 protein FAM92A1.</title>
        <authorList>
            <person name="Ruan X.Z."/>
            <person name="Yan F."/>
            <person name="Zhao X.Y."/>
            <person name="Wang C.T."/>
            <person name="Song M."/>
            <person name="Yang H.S."/>
            <person name="Deng H.X."/>
            <person name="Wei Y.Q."/>
        </authorList>
    </citation>
    <scope>NUCLEOTIDE SEQUENCE [MRNA] (ISOFORMS 1 AND 2)</scope>
    <scope>SUBCELLULAR LOCATION (ISOFORM 3)</scope>
</reference>
<reference key="2">
    <citation type="journal article" date="2004" name="Nat. Genet.">
        <title>Complete sequencing and characterization of 21,243 full-length human cDNAs.</title>
        <authorList>
            <person name="Ota T."/>
            <person name="Suzuki Y."/>
            <person name="Nishikawa T."/>
            <person name="Otsuki T."/>
            <person name="Sugiyama T."/>
            <person name="Irie R."/>
            <person name="Wakamatsu A."/>
            <person name="Hayashi K."/>
            <person name="Sato H."/>
            <person name="Nagai K."/>
            <person name="Kimura K."/>
            <person name="Makita H."/>
            <person name="Sekine M."/>
            <person name="Obayashi M."/>
            <person name="Nishi T."/>
            <person name="Shibahara T."/>
            <person name="Tanaka T."/>
            <person name="Ishii S."/>
            <person name="Yamamoto J."/>
            <person name="Saito K."/>
            <person name="Kawai Y."/>
            <person name="Isono Y."/>
            <person name="Nakamura Y."/>
            <person name="Nagahari K."/>
            <person name="Murakami K."/>
            <person name="Yasuda T."/>
            <person name="Iwayanagi T."/>
            <person name="Wagatsuma M."/>
            <person name="Shiratori A."/>
            <person name="Sudo H."/>
            <person name="Hosoiri T."/>
            <person name="Kaku Y."/>
            <person name="Kodaira H."/>
            <person name="Kondo H."/>
            <person name="Sugawara M."/>
            <person name="Takahashi M."/>
            <person name="Kanda K."/>
            <person name="Yokoi T."/>
            <person name="Furuya T."/>
            <person name="Kikkawa E."/>
            <person name="Omura Y."/>
            <person name="Abe K."/>
            <person name="Kamihara K."/>
            <person name="Katsuta N."/>
            <person name="Sato K."/>
            <person name="Tanikawa M."/>
            <person name="Yamazaki M."/>
            <person name="Ninomiya K."/>
            <person name="Ishibashi T."/>
            <person name="Yamashita H."/>
            <person name="Murakawa K."/>
            <person name="Fujimori K."/>
            <person name="Tanai H."/>
            <person name="Kimata M."/>
            <person name="Watanabe M."/>
            <person name="Hiraoka S."/>
            <person name="Chiba Y."/>
            <person name="Ishida S."/>
            <person name="Ono Y."/>
            <person name="Takiguchi S."/>
            <person name="Watanabe S."/>
            <person name="Yosida M."/>
            <person name="Hotuta T."/>
            <person name="Kusano J."/>
            <person name="Kanehori K."/>
            <person name="Takahashi-Fujii A."/>
            <person name="Hara H."/>
            <person name="Tanase T.-O."/>
            <person name="Nomura Y."/>
            <person name="Togiya S."/>
            <person name="Komai F."/>
            <person name="Hara R."/>
            <person name="Takeuchi K."/>
            <person name="Arita M."/>
            <person name="Imose N."/>
            <person name="Musashino K."/>
            <person name="Yuuki H."/>
            <person name="Oshima A."/>
            <person name="Sasaki N."/>
            <person name="Aotsuka S."/>
            <person name="Yoshikawa Y."/>
            <person name="Matsunawa H."/>
            <person name="Ichihara T."/>
            <person name="Shiohata N."/>
            <person name="Sano S."/>
            <person name="Moriya S."/>
            <person name="Momiyama H."/>
            <person name="Satoh N."/>
            <person name="Takami S."/>
            <person name="Terashima Y."/>
            <person name="Suzuki O."/>
            <person name="Nakagawa S."/>
            <person name="Senoh A."/>
            <person name="Mizoguchi H."/>
            <person name="Goto Y."/>
            <person name="Shimizu F."/>
            <person name="Wakebe H."/>
            <person name="Hishigaki H."/>
            <person name="Watanabe T."/>
            <person name="Sugiyama A."/>
            <person name="Takemoto M."/>
            <person name="Kawakami B."/>
            <person name="Yamazaki M."/>
            <person name="Watanabe K."/>
            <person name="Kumagai A."/>
            <person name="Itakura S."/>
            <person name="Fukuzumi Y."/>
            <person name="Fujimori Y."/>
            <person name="Komiyama M."/>
            <person name="Tashiro H."/>
            <person name="Tanigami A."/>
            <person name="Fujiwara T."/>
            <person name="Ono T."/>
            <person name="Yamada K."/>
            <person name="Fujii Y."/>
            <person name="Ozaki K."/>
            <person name="Hirao M."/>
            <person name="Ohmori Y."/>
            <person name="Kawabata A."/>
            <person name="Hikiji T."/>
            <person name="Kobatake N."/>
            <person name="Inagaki H."/>
            <person name="Ikema Y."/>
            <person name="Okamoto S."/>
            <person name="Okitani R."/>
            <person name="Kawakami T."/>
            <person name="Noguchi S."/>
            <person name="Itoh T."/>
            <person name="Shigeta K."/>
            <person name="Senba T."/>
            <person name="Matsumura K."/>
            <person name="Nakajima Y."/>
            <person name="Mizuno T."/>
            <person name="Morinaga M."/>
            <person name="Sasaki M."/>
            <person name="Togashi T."/>
            <person name="Oyama M."/>
            <person name="Hata H."/>
            <person name="Watanabe M."/>
            <person name="Komatsu T."/>
            <person name="Mizushima-Sugano J."/>
            <person name="Satoh T."/>
            <person name="Shirai Y."/>
            <person name="Takahashi Y."/>
            <person name="Nakagawa K."/>
            <person name="Okumura K."/>
            <person name="Nagase T."/>
            <person name="Nomura N."/>
            <person name="Kikuchi H."/>
            <person name="Masuho Y."/>
            <person name="Yamashita R."/>
            <person name="Nakai K."/>
            <person name="Yada T."/>
            <person name="Nakamura Y."/>
            <person name="Ohara O."/>
            <person name="Isogai T."/>
            <person name="Sugano S."/>
        </authorList>
    </citation>
    <scope>NUCLEOTIDE SEQUENCE [LARGE SCALE MRNA] (ISOFORM 4)</scope>
</reference>
<reference key="3">
    <citation type="journal article" date="2007" name="BMC Genomics">
        <title>The full-ORF clone resource of the German cDNA consortium.</title>
        <authorList>
            <person name="Bechtel S."/>
            <person name="Rosenfelder H."/>
            <person name="Duda A."/>
            <person name="Schmidt C.P."/>
            <person name="Ernst U."/>
            <person name="Wellenreuther R."/>
            <person name="Mehrle A."/>
            <person name="Schuster C."/>
            <person name="Bahr A."/>
            <person name="Bloecker H."/>
            <person name="Heubner D."/>
            <person name="Hoerlein A."/>
            <person name="Michel G."/>
            <person name="Wedler H."/>
            <person name="Koehrer K."/>
            <person name="Ottenwaelder B."/>
            <person name="Poustka A."/>
            <person name="Wiemann S."/>
            <person name="Schupp I."/>
        </authorList>
    </citation>
    <scope>NUCLEOTIDE SEQUENCE [LARGE SCALE MRNA] (ISOFORM 5)</scope>
    <source>
        <tissue>Brain</tissue>
    </source>
</reference>
<reference key="4">
    <citation type="journal article" date="2006" name="Nature">
        <title>DNA sequence and analysis of human chromosome 8.</title>
        <authorList>
            <person name="Nusbaum C."/>
            <person name="Mikkelsen T.S."/>
            <person name="Zody M.C."/>
            <person name="Asakawa S."/>
            <person name="Taudien S."/>
            <person name="Garber M."/>
            <person name="Kodira C.D."/>
            <person name="Schueler M.G."/>
            <person name="Shimizu A."/>
            <person name="Whittaker C.A."/>
            <person name="Chang J.L."/>
            <person name="Cuomo C.A."/>
            <person name="Dewar K."/>
            <person name="FitzGerald M.G."/>
            <person name="Yang X."/>
            <person name="Allen N.R."/>
            <person name="Anderson S."/>
            <person name="Asakawa T."/>
            <person name="Blechschmidt K."/>
            <person name="Bloom T."/>
            <person name="Borowsky M.L."/>
            <person name="Butler J."/>
            <person name="Cook A."/>
            <person name="Corum B."/>
            <person name="DeArellano K."/>
            <person name="DeCaprio D."/>
            <person name="Dooley K.T."/>
            <person name="Dorris L. III"/>
            <person name="Engels R."/>
            <person name="Gloeckner G."/>
            <person name="Hafez N."/>
            <person name="Hagopian D.S."/>
            <person name="Hall J.L."/>
            <person name="Ishikawa S.K."/>
            <person name="Jaffe D.B."/>
            <person name="Kamat A."/>
            <person name="Kudoh J."/>
            <person name="Lehmann R."/>
            <person name="Lokitsang T."/>
            <person name="Macdonald P."/>
            <person name="Major J.E."/>
            <person name="Matthews C.D."/>
            <person name="Mauceli E."/>
            <person name="Menzel U."/>
            <person name="Mihalev A.H."/>
            <person name="Minoshima S."/>
            <person name="Murayama Y."/>
            <person name="Naylor J.W."/>
            <person name="Nicol R."/>
            <person name="Nguyen C."/>
            <person name="O'Leary S.B."/>
            <person name="O'Neill K."/>
            <person name="Parker S.C.J."/>
            <person name="Polley A."/>
            <person name="Raymond C.K."/>
            <person name="Reichwald K."/>
            <person name="Rodriguez J."/>
            <person name="Sasaki T."/>
            <person name="Schilhabel M."/>
            <person name="Siddiqui R."/>
            <person name="Smith C.L."/>
            <person name="Sneddon T.P."/>
            <person name="Talamas J.A."/>
            <person name="Tenzin P."/>
            <person name="Topham K."/>
            <person name="Venkataraman V."/>
            <person name="Wen G."/>
            <person name="Yamazaki S."/>
            <person name="Young S.K."/>
            <person name="Zeng Q."/>
            <person name="Zimmer A.R."/>
            <person name="Rosenthal A."/>
            <person name="Birren B.W."/>
            <person name="Platzer M."/>
            <person name="Shimizu N."/>
            <person name="Lander E.S."/>
        </authorList>
    </citation>
    <scope>NUCLEOTIDE SEQUENCE [LARGE SCALE GENOMIC DNA]</scope>
</reference>
<reference key="5">
    <citation type="journal article" date="2004" name="Genome Res.">
        <title>The status, quality, and expansion of the NIH full-length cDNA project: the Mammalian Gene Collection (MGC).</title>
        <authorList>
            <consortium name="The MGC Project Team"/>
        </authorList>
    </citation>
    <scope>NUCLEOTIDE SEQUENCE [LARGE SCALE MRNA] (ISOFORMS 1 AND 3)</scope>
    <source>
        <tissue>Testis</tissue>
        <tissue>Uterus</tissue>
    </source>
</reference>
<reference key="6">
    <citation type="journal article" date="2016" name="Mol. Cell. Biol.">
        <title>BAR domain-containing FAM92 proteins interact with chibby1 to facilitate ciliogenesis.</title>
        <authorList>
            <person name="Li F.Q."/>
            <person name="Chen X."/>
            <person name="Fisher C."/>
            <person name="Siller S.S."/>
            <person name="Zelikman K."/>
            <person name="Kuriyama R."/>
            <person name="Takemaru K.I."/>
        </authorList>
    </citation>
    <scope>INTERACTION WITH CBY1</scope>
    <scope>SUBCELLULAR LOCATION</scope>
    <scope>FUNCTION</scope>
    <scope>SUBUNIT</scope>
    <scope>MUTAGENESIS OF LYS-107; ARG-110; LYS-114; ARG-132; ARG-134 AND ARG-136</scope>
</reference>
<reference key="7">
    <citation type="journal article" date="2019" name="J. Bone Miner. Res.">
        <title>FAM92A underlies nonsyndromic postaxial polydactyly in humans and an abnormal limb and digit skeletal phenotype in mice.</title>
        <authorList>
            <person name="Schrauwen I."/>
            <person name="Giese A.P."/>
            <person name="Aziz A."/>
            <person name="Lafont D.T."/>
            <person name="Chakchouk I."/>
            <person name="Santos-Cortez R.L.P."/>
            <person name="Lee K."/>
            <person name="Acharya A."/>
            <person name="Khan F.S."/>
            <person name="Ullah A."/>
            <person name="Nickerson D.A."/>
            <person name="Bamshad M.J."/>
            <person name="Ali G."/>
            <person name="Riazuddin S."/>
            <person name="Ansar M."/>
            <person name="Ahmad W."/>
            <person name="Ahmed Z.M."/>
            <person name="Leal S.M."/>
        </authorList>
    </citation>
    <scope>FUNCTION</scope>
    <scope>SUBCELLULAR LOCATION</scope>
    <scope>INTERACTION WITH CBY1</scope>
    <scope>SUBUNIT</scope>
    <scope>INVOLVEMENT IN PAPA9</scope>
    <scope>VARIANT PAPA9 160-ARG--LYS-289 DEL</scope>
    <scope>CHARACTERIZATION OF VARIANT PAPA9 160-ARG--LYS-289 DEL</scope>
</reference>
<reference key="8">
    <citation type="journal article" date="2019" name="J. Cell Biol.">
        <title>FAM92A1 is a BAR domain protein required for mitochondrial ultrastructure and function.</title>
        <authorList>
            <person name="Wang L."/>
            <person name="Yan Z."/>
            <person name="Vihinen H."/>
            <person name="Eriksson O."/>
            <person name="Wang W."/>
            <person name="Soliymani R."/>
            <person name="Lu Y."/>
            <person name="Xue Y."/>
            <person name="Jokitalo E."/>
            <person name="Li J."/>
            <person name="Zhao H."/>
        </authorList>
    </citation>
    <scope>FUNCTION</scope>
    <scope>SUBCELLULAR LOCATION</scope>
    <scope>TOPOLOGY</scope>
    <scope>TRANSIT PEPTIDE</scope>
    <scope>MUTAGENESIS OF LYS-107; LYS-109; ARG-110; ARG-132; ARG-134; ARG-136; ARG-264; ARG-266 AND LYS-267</scope>
</reference>
<reference key="9">
    <citation type="journal article" date="2024" name="J. Cell Biol.">
        <title>The Cby3/ciBAR1 complex positions the annulus along the sperm flagellum during spermiogenesis.</title>
        <authorList>
            <person name="Hoque M."/>
            <person name="Li F.Q."/>
            <person name="Weber W.D."/>
            <person name="Chen J.J."/>
            <person name="Kim E.N."/>
            <person name="Kuo P.L."/>
            <person name="Visconti P.E."/>
            <person name="Takemaru K.I."/>
        </authorList>
    </citation>
    <scope>INTERACTION WITH CBY3</scope>
</reference>
<sequence>MMRRTLENRNAQTKQLQTAVSNVEKHFGELCQIFAAYVRKTARLRDKADLLVNEINAYAATETPHLKLGLMNFADEFAKLQDYRQAEVERLEAKVVEPLKTYGTIVKMKRDDLKATLTARNREAKQLTQLERTRQRNPSDRHVISQAETELQRAAMDASRTSRHLEETINNFERQKMKDIKTIFSEFITIEMLFHGKALEVYTAAYQNIQNIDEDEDLEVFRNSLYAPDYSSRLDIVRANSKSPLQRSLSAKCVSGTGQVSTCRLRKDQQAEDDEDDELDVTEEENFLK</sequence>
<dbReference type="EMBL" id="DQ327715">
    <property type="protein sequence ID" value="ABC55436.1"/>
    <property type="molecule type" value="mRNA"/>
</dbReference>
<dbReference type="EMBL" id="DQ327716">
    <property type="protein sequence ID" value="ABC55437.1"/>
    <property type="molecule type" value="mRNA"/>
</dbReference>
<dbReference type="EMBL" id="AK096298">
    <property type="protein sequence ID" value="BAC04753.1"/>
    <property type="molecule type" value="mRNA"/>
</dbReference>
<dbReference type="EMBL" id="CR627475">
    <property type="protein sequence ID" value="CAH10675.1"/>
    <property type="molecule type" value="mRNA"/>
</dbReference>
<dbReference type="EMBL" id="AC010834">
    <property type="status" value="NOT_ANNOTATED_CDS"/>
    <property type="molecule type" value="Genomic_DNA"/>
</dbReference>
<dbReference type="EMBL" id="AC120053">
    <property type="status" value="NOT_ANNOTATED_CDS"/>
    <property type="molecule type" value="Genomic_DNA"/>
</dbReference>
<dbReference type="EMBL" id="BC014598">
    <property type="protein sequence ID" value="AAH14598.2"/>
    <property type="status" value="ALT_INIT"/>
    <property type="molecule type" value="mRNA"/>
</dbReference>
<dbReference type="EMBL" id="BC108707">
    <property type="protein sequence ID" value="AAI08708.1"/>
    <property type="status" value="ALT_INIT"/>
    <property type="molecule type" value="mRNA"/>
</dbReference>
<dbReference type="CCDS" id="CCDS47892.1">
    <molecule id="A1XBS5-1"/>
</dbReference>
<dbReference type="CCDS" id="CCDS64933.1">
    <molecule id="A1XBS5-2"/>
</dbReference>
<dbReference type="RefSeq" id="NP_001269963.1">
    <molecule id="A1XBS5-2"/>
    <property type="nucleotide sequence ID" value="NM_001283034.2"/>
</dbReference>
<dbReference type="RefSeq" id="NP_660312.2">
    <molecule id="A1XBS5-1"/>
    <property type="nucleotide sequence ID" value="NM_145269.5"/>
</dbReference>
<dbReference type="PDB" id="8CEG">
    <property type="method" value="X-ray"/>
    <property type="resolution" value="2.03 A"/>
    <property type="chains" value="A/B=1-219"/>
</dbReference>
<dbReference type="PDBsum" id="8CEG"/>
<dbReference type="SMR" id="A1XBS5"/>
<dbReference type="BioGRID" id="126476">
    <property type="interactions" value="28"/>
</dbReference>
<dbReference type="FunCoup" id="A1XBS5">
    <property type="interactions" value="612"/>
</dbReference>
<dbReference type="IntAct" id="A1XBS5">
    <property type="interactions" value="21"/>
</dbReference>
<dbReference type="MINT" id="A1XBS5"/>
<dbReference type="STRING" id="9606.ENSP00000429367"/>
<dbReference type="iPTMnet" id="A1XBS5"/>
<dbReference type="PhosphoSitePlus" id="A1XBS5"/>
<dbReference type="BioMuta" id="FAM92A"/>
<dbReference type="jPOST" id="A1XBS5"/>
<dbReference type="MassIVE" id="A1XBS5"/>
<dbReference type="PaxDb" id="9606-ENSP00000429367"/>
<dbReference type="PeptideAtlas" id="A1XBS5"/>
<dbReference type="ProteomicsDB" id="157">
    <molecule id="A1XBS5-1"/>
</dbReference>
<dbReference type="ProteomicsDB" id="158">
    <molecule id="A1XBS5-2"/>
</dbReference>
<dbReference type="ProteomicsDB" id="159">
    <molecule id="A1XBS5-3"/>
</dbReference>
<dbReference type="ProteomicsDB" id="160">
    <molecule id="A1XBS5-4"/>
</dbReference>
<dbReference type="ProteomicsDB" id="161">
    <molecule id="A1XBS5-5"/>
</dbReference>
<dbReference type="Pumba" id="A1XBS5"/>
<dbReference type="Antibodypedia" id="25708">
    <property type="antibodies" value="120 antibodies from 21 providers"/>
</dbReference>
<dbReference type="DNASU" id="137392"/>
<dbReference type="Ensembl" id="ENST00000423990.6">
    <molecule id="A1XBS5-2"/>
    <property type="protein sequence ID" value="ENSP00000401774.2"/>
    <property type="gene ID" value="ENSG00000188343.14"/>
</dbReference>
<dbReference type="Ensembl" id="ENST00000452913.6">
    <molecule id="A1XBS5-3"/>
    <property type="protein sequence ID" value="ENSP00000391671.2"/>
    <property type="gene ID" value="ENSG00000188343.14"/>
</dbReference>
<dbReference type="Ensembl" id="ENST00000518116.5">
    <molecule id="A1XBS5-4"/>
    <property type="protein sequence ID" value="ENSP00000428065.1"/>
    <property type="gene ID" value="ENSG00000188343.14"/>
</dbReference>
<dbReference type="Ensembl" id="ENST00000518322.6">
    <molecule id="A1XBS5-1"/>
    <property type="protein sequence ID" value="ENSP00000429367.1"/>
    <property type="gene ID" value="ENSG00000188343.14"/>
</dbReference>
<dbReference type="GeneID" id="137392"/>
<dbReference type="KEGG" id="hsa:137392"/>
<dbReference type="MANE-Select" id="ENST00000518322.6">
    <property type="protein sequence ID" value="ENSP00000429367.1"/>
    <property type="RefSeq nucleotide sequence ID" value="NM_145269.5"/>
    <property type="RefSeq protein sequence ID" value="NP_660312.2"/>
</dbReference>
<dbReference type="UCSC" id="uc064onr.1">
    <molecule id="A1XBS5-1"/>
    <property type="organism name" value="human"/>
</dbReference>
<dbReference type="AGR" id="HGNC:30452"/>
<dbReference type="CTD" id="137392"/>
<dbReference type="DisGeNET" id="137392"/>
<dbReference type="GeneCards" id="CIBAR1"/>
<dbReference type="HGNC" id="HGNC:30452">
    <property type="gene designation" value="CIBAR1"/>
</dbReference>
<dbReference type="HPA" id="ENSG00000188343">
    <property type="expression patterns" value="Tissue enhanced (testis)"/>
</dbReference>
<dbReference type="MalaCards" id="CIBAR1"/>
<dbReference type="MIM" id="617273">
    <property type="type" value="gene"/>
</dbReference>
<dbReference type="MIM" id="618219">
    <property type="type" value="phenotype"/>
</dbReference>
<dbReference type="neXtProt" id="NX_A1XBS5"/>
<dbReference type="OpenTargets" id="ENSG00000188343"/>
<dbReference type="Orphanet" id="93334">
    <property type="disease" value="Postaxial polydactyly type A"/>
</dbReference>
<dbReference type="VEuPathDB" id="HostDB:ENSG00000188343"/>
<dbReference type="eggNOG" id="ENOG502QQ0N">
    <property type="taxonomic scope" value="Eukaryota"/>
</dbReference>
<dbReference type="GeneTree" id="ENSGT00390000010285"/>
<dbReference type="HOGENOM" id="CLU_072172_1_0_1"/>
<dbReference type="InParanoid" id="A1XBS5"/>
<dbReference type="OMA" id="WMLMNND"/>
<dbReference type="OrthoDB" id="60621at2759"/>
<dbReference type="PAN-GO" id="A1XBS5">
    <property type="GO annotations" value="3 GO annotations based on evolutionary models"/>
</dbReference>
<dbReference type="PhylomeDB" id="A1XBS5"/>
<dbReference type="TreeFam" id="TF324316"/>
<dbReference type="PathwayCommons" id="A1XBS5"/>
<dbReference type="SignaLink" id="A1XBS5"/>
<dbReference type="BioGRID-ORCS" id="137392">
    <property type="hits" value="12 hits in 1112 CRISPR screens"/>
</dbReference>
<dbReference type="ChiTaRS" id="FAM92A">
    <property type="organism name" value="human"/>
</dbReference>
<dbReference type="GenomeRNAi" id="137392"/>
<dbReference type="Pharos" id="A1XBS5">
    <property type="development level" value="Tbio"/>
</dbReference>
<dbReference type="PRO" id="PR:A1XBS5"/>
<dbReference type="Proteomes" id="UP000005640">
    <property type="component" value="Chromosome 8"/>
</dbReference>
<dbReference type="RNAct" id="A1XBS5">
    <property type="molecule type" value="protein"/>
</dbReference>
<dbReference type="Bgee" id="ENSG00000188343">
    <property type="expression patterns" value="Expressed in left testis and 152 other cell types or tissues"/>
</dbReference>
<dbReference type="ExpressionAtlas" id="A1XBS5">
    <property type="expression patterns" value="baseline and differential"/>
</dbReference>
<dbReference type="GO" id="GO:0005814">
    <property type="term" value="C:centriole"/>
    <property type="evidence" value="ECO:0000314"/>
    <property type="project" value="UniProtKB"/>
</dbReference>
<dbReference type="GO" id="GO:0036064">
    <property type="term" value="C:ciliary basal body"/>
    <property type="evidence" value="ECO:0000318"/>
    <property type="project" value="GO_Central"/>
</dbReference>
<dbReference type="GO" id="GO:0097546">
    <property type="term" value="C:ciliary base"/>
    <property type="evidence" value="ECO:0000314"/>
    <property type="project" value="UniProtKB"/>
</dbReference>
<dbReference type="GO" id="GO:0035869">
    <property type="term" value="C:ciliary transition zone"/>
    <property type="evidence" value="ECO:0000250"/>
    <property type="project" value="UniProtKB"/>
</dbReference>
<dbReference type="GO" id="GO:0005737">
    <property type="term" value="C:cytoplasm"/>
    <property type="evidence" value="ECO:0000314"/>
    <property type="project" value="UniProtKB"/>
</dbReference>
<dbReference type="GO" id="GO:0030061">
    <property type="term" value="C:mitochondrial crista"/>
    <property type="evidence" value="ECO:0000315"/>
    <property type="project" value="UniProtKB"/>
</dbReference>
<dbReference type="GO" id="GO:0005743">
    <property type="term" value="C:mitochondrial inner membrane"/>
    <property type="evidence" value="ECO:0000314"/>
    <property type="project" value="UniProtKB"/>
</dbReference>
<dbReference type="GO" id="GO:0005739">
    <property type="term" value="C:mitochondrion"/>
    <property type="evidence" value="ECO:0000314"/>
    <property type="project" value="HPA"/>
</dbReference>
<dbReference type="GO" id="GO:0005634">
    <property type="term" value="C:nucleus"/>
    <property type="evidence" value="ECO:0000314"/>
    <property type="project" value="UniProtKB"/>
</dbReference>
<dbReference type="GO" id="GO:0097227">
    <property type="term" value="C:sperm annulus"/>
    <property type="evidence" value="ECO:0000250"/>
    <property type="project" value="UniProtKB"/>
</dbReference>
<dbReference type="GO" id="GO:0005543">
    <property type="term" value="F:phospholipid binding"/>
    <property type="evidence" value="ECO:0000314"/>
    <property type="project" value="UniProtKB"/>
</dbReference>
<dbReference type="GO" id="GO:0060271">
    <property type="term" value="P:cilium assembly"/>
    <property type="evidence" value="ECO:0000315"/>
    <property type="project" value="UniProtKB"/>
</dbReference>
<dbReference type="GO" id="GO:0007007">
    <property type="term" value="P:inner mitochondrial membrane organization"/>
    <property type="evidence" value="ECO:0000315"/>
    <property type="project" value="UniProtKB"/>
</dbReference>
<dbReference type="GO" id="GO:0035108">
    <property type="term" value="P:limb morphogenesis"/>
    <property type="evidence" value="ECO:0000315"/>
    <property type="project" value="UniProtKB"/>
</dbReference>
<dbReference type="GO" id="GO:0061024">
    <property type="term" value="P:membrane organization"/>
    <property type="evidence" value="ECO:0000314"/>
    <property type="project" value="UniProtKB"/>
</dbReference>
<dbReference type="GO" id="GO:0097749">
    <property type="term" value="P:membrane tubulation"/>
    <property type="evidence" value="ECO:0000315"/>
    <property type="project" value="UniProtKB"/>
</dbReference>
<dbReference type="GO" id="GO:0045880">
    <property type="term" value="P:positive regulation of smoothened signaling pathway"/>
    <property type="evidence" value="ECO:0000250"/>
    <property type="project" value="UniProtKB"/>
</dbReference>
<dbReference type="GO" id="GO:0007283">
    <property type="term" value="P:spermatogenesis"/>
    <property type="evidence" value="ECO:0000250"/>
    <property type="project" value="UniProtKB"/>
</dbReference>
<dbReference type="CDD" id="cd07598">
    <property type="entry name" value="BAR_FAM92"/>
    <property type="match status" value="1"/>
</dbReference>
<dbReference type="FunFam" id="1.20.1270.60:FF:000047">
    <property type="entry name" value="protein FAM92A isoform X1"/>
    <property type="match status" value="1"/>
</dbReference>
<dbReference type="Gene3D" id="1.20.1270.60">
    <property type="entry name" value="Arfaptin homology (AH) domain/BAR domain"/>
    <property type="match status" value="1"/>
</dbReference>
<dbReference type="InterPro" id="IPR027267">
    <property type="entry name" value="AH/BAR_dom_sf"/>
</dbReference>
<dbReference type="InterPro" id="IPR035590">
    <property type="entry name" value="BAR_CBAR1/2"/>
</dbReference>
<dbReference type="InterPro" id="IPR009602">
    <property type="entry name" value="CBAR/FAM92"/>
</dbReference>
<dbReference type="PANTHER" id="PTHR21223:SF4">
    <property type="entry name" value="CBY1-INTERACTING BAR DOMAIN-CONTAINING PROTEIN 1"/>
    <property type="match status" value="1"/>
</dbReference>
<dbReference type="PANTHER" id="PTHR21223">
    <property type="entry name" value="CBY1-INTERACTING BAR DOMAIN-CONTAINING PROTEIN HOMOLOG"/>
    <property type="match status" value="1"/>
</dbReference>
<dbReference type="Pfam" id="PF06730">
    <property type="entry name" value="FAM92"/>
    <property type="match status" value="1"/>
</dbReference>
<dbReference type="SUPFAM" id="SSF103657">
    <property type="entry name" value="BAR/IMD domain-like"/>
    <property type="match status" value="1"/>
</dbReference>
<organism>
    <name type="scientific">Homo sapiens</name>
    <name type="common">Human</name>
    <dbReference type="NCBI Taxonomy" id="9606"/>
    <lineage>
        <taxon>Eukaryota</taxon>
        <taxon>Metazoa</taxon>
        <taxon>Chordata</taxon>
        <taxon>Craniata</taxon>
        <taxon>Vertebrata</taxon>
        <taxon>Euteleostomi</taxon>
        <taxon>Mammalia</taxon>
        <taxon>Eutheria</taxon>
        <taxon>Euarchontoglires</taxon>
        <taxon>Primates</taxon>
        <taxon>Haplorrhini</taxon>
        <taxon>Catarrhini</taxon>
        <taxon>Hominidae</taxon>
        <taxon>Homo</taxon>
    </lineage>
</organism>
<proteinExistence type="evidence at protein level"/>
<accession>A1XBS5</accession>
<accession>A1XBS4</accession>
<accession>Q32ND3</accession>
<accession>Q6AHW7</accession>
<accession>Q8N8R1</accession>
<accession>Q96L09</accession>
<feature type="transit peptide" description="Mitochondrion" evidence="7">
    <location>
        <begin position="1"/>
        <end position="47"/>
    </location>
</feature>
<feature type="chain" id="PRO_0000287080" description="CBY1-interacting BAR domain-containing protein 1">
    <location>
        <begin position="48"/>
        <end position="289"/>
    </location>
</feature>
<feature type="region of interest" description="BAR-like" evidence="14">
    <location>
        <begin position="10"/>
        <end position="220"/>
    </location>
</feature>
<feature type="region of interest" description="Disordered" evidence="3">
    <location>
        <begin position="265"/>
        <end position="289"/>
    </location>
</feature>
<feature type="coiled-coil region" evidence="2">
    <location>
        <begin position="107"/>
        <end position="178"/>
    </location>
</feature>
<feature type="compositionally biased region" description="Acidic residues" evidence="3">
    <location>
        <begin position="271"/>
        <end position="289"/>
    </location>
</feature>
<feature type="splice variant" id="VSP_025292" description="In isoform 5." evidence="12">
    <original>ERLEAKVVE</original>
    <variation>WSEITVSLL</variation>
    <location>
        <begin position="89"/>
        <end position="97"/>
    </location>
</feature>
<feature type="splice variant" id="VSP_025293" description="In isoform 5." evidence="12">
    <location>
        <begin position="98"/>
        <end position="289"/>
    </location>
</feature>
<feature type="splice variant" id="VSP_025294" description="In isoform 2." evidence="11">
    <location>
        <begin position="182"/>
        <end position="219"/>
    </location>
</feature>
<feature type="splice variant" id="VSP_025295" description="In isoform 4." evidence="9">
    <original>VFRNSLYAPDYSSRLDIVRANSKSPLQRSLSAKCVSGTGQVSTCRLRKDQQAEDDEDDELDVTEEENFLK</original>
    <variation>RWSFAMLPRLVLNSWGSSDPPALASQSVRFSEILCMHQIIHLV</variation>
    <location>
        <begin position="220"/>
        <end position="289"/>
    </location>
</feature>
<feature type="splice variant" id="VSP_025296" description="In isoform 3." evidence="10">
    <original>VSTCRLRKDQQAEDDEDDELDVTEEENFLK</original>
    <variation>EAGWAATCQTLI</variation>
    <location>
        <begin position="260"/>
        <end position="289"/>
    </location>
</feature>
<feature type="sequence variant" id="VAR_081578" description="In PAPA9; does not form homodimers; does not interact with CBY1; does not localize to cilium basal body." evidence="6">
    <location>
        <begin position="160"/>
        <end position="289"/>
    </location>
</feature>
<feature type="sequence variant" id="VAR_062190" description="In dbSNP:rs36117362.">
    <original>R</original>
    <variation>Q</variation>
    <location>
        <position position="222"/>
    </location>
</feature>
<feature type="mutagenesis site" description="Reduced membrane-binding and significant reduction in membrane remodeling activity; when associated with A-109 and A-110." evidence="7">
    <original>K</original>
    <variation>A</variation>
    <location>
        <position position="107"/>
    </location>
</feature>
<feature type="mutagenesis site" description="Abolishes ability to induce membrane remodeling in the presence of CBY1; when associated with E-110; E-114; E-132; E-134 and E-136." evidence="5">
    <original>K</original>
    <variation>E</variation>
    <location>
        <position position="107"/>
    </location>
</feature>
<feature type="mutagenesis site" description="Reduced membrane-binding and significant reduction in membrane remodeling activity; when associated with A-107 and A-110." evidence="7">
    <original>K</original>
    <variation>A</variation>
    <location>
        <position position="109"/>
    </location>
</feature>
<feature type="mutagenesis site" description="Reduced membrane-binding and significant reduction in membrane remodeling activity; when associated with A-107 and A-109." evidence="7">
    <original>R</original>
    <variation>A</variation>
    <location>
        <position position="110"/>
    </location>
</feature>
<feature type="mutagenesis site" description="Abolishes ability to induce membrane remodeling in the presence of CBY1; when associated with E-107;E-114; E-132; E-134 and E-136." evidence="5">
    <original>R</original>
    <variation>E</variation>
    <location>
        <position position="110"/>
    </location>
</feature>
<feature type="mutagenesis site" description="Abolishes ability to induce membrane remodeling in the presence of CBY1; when associated with E-107; E-110; E-132; E-134 and E-136." evidence="5">
    <original>K</original>
    <variation>E</variation>
    <location>
        <position position="114"/>
    </location>
</feature>
<feature type="mutagenesis site" description="Reduced membrane-binding and significant reduction in membrane remodeling activity; when associated with A-134 and A-136." evidence="7">
    <original>R</original>
    <variation>A</variation>
    <location>
        <position position="132"/>
    </location>
</feature>
<feature type="mutagenesis site" description="Abolishes ability to induce membrane remodeling in the presence of CBY1; when associated with E-107; E-110; E-114; E-134 and E-136." evidence="5">
    <original>R</original>
    <variation>E</variation>
    <location>
        <position position="132"/>
    </location>
</feature>
<feature type="mutagenesis site" description="Reduced membrane-binding and significant reduction in membrane remodeling activity; when associated with A-132 and A-136." evidence="7">
    <original>R</original>
    <variation>A</variation>
    <location>
        <position position="134"/>
    </location>
</feature>
<feature type="mutagenesis site" description="Abolishes ability to induce membrane remodeling in the presence of CBY1; when associated with E-107; E-110; E-114; E-132 and E-136." evidence="5">
    <original>R</original>
    <variation>E</variation>
    <location>
        <position position="134"/>
    </location>
</feature>
<feature type="mutagenesis site" description="Reduced membrane-binding and significant reduction in membrane remodeling activity; when associated with A-132 and A-134." evidence="7">
    <original>R</original>
    <variation>A</variation>
    <location>
        <position position="136"/>
    </location>
</feature>
<feature type="mutagenesis site" description="Abolishes ability to induce membrane remodeling in the presence of CBY1; when associated with E-107; E-110; E-114; E-132 and E-134." evidence="5">
    <original>R</original>
    <variation>E</variation>
    <location>
        <position position="136"/>
    </location>
</feature>
<feature type="mutagenesis site" description="Reduced membrane-binding and significant reduction in membrane remodeling activity; when associated with A-266 and A-267." evidence="7">
    <original>R</original>
    <variation>A</variation>
    <location>
        <position position="264"/>
    </location>
</feature>
<feature type="mutagenesis site" description="Reduced membrane-binding and significant reduction in membrane remodeling activity; when associated with A-264 and A-267." evidence="7">
    <original>R</original>
    <variation>A</variation>
    <location>
        <position position="266"/>
    </location>
</feature>
<feature type="mutagenesis site" description="Reduced membrane-binding and significant reduction in membrane remodeling activity; when associated with A-264 and A-266." evidence="7">
    <original>K</original>
    <variation>A</variation>
    <location>
        <position position="267"/>
    </location>
</feature>
<feature type="sequence conflict" description="In Ref. 1; ABC55436." evidence="13" ref="1">
    <original>N</original>
    <variation>S</variation>
    <location>
        <position position="137"/>
    </location>
</feature>
<feature type="sequence conflict" description="In Ref. 2; BAC04753." evidence="13" ref="2">
    <original>E</original>
    <variation>G</variation>
    <location>
        <position position="150"/>
    </location>
</feature>
<feature type="sequence conflict" description="In Ref. 1; ABC55437." evidence="13" ref="1">
    <original>V</original>
    <variation>I</variation>
    <location>
        <position position="281"/>
    </location>
</feature>
<feature type="helix" evidence="16">
    <location>
        <begin position="2"/>
        <end position="6"/>
    </location>
</feature>
<feature type="helix" evidence="16">
    <location>
        <begin position="9"/>
        <end position="60"/>
    </location>
</feature>
<feature type="helix" evidence="16">
    <location>
        <begin position="64"/>
        <end position="94"/>
    </location>
</feature>
<feature type="helix" evidence="16">
    <location>
        <begin position="96"/>
        <end position="124"/>
    </location>
</feature>
<feature type="helix" evidence="16">
    <location>
        <begin position="126"/>
        <end position="136"/>
    </location>
</feature>
<feature type="helix" evidence="16">
    <location>
        <begin position="143"/>
        <end position="210"/>
    </location>
</feature>
<gene>
    <name evidence="15" type="primary">CIBAR1</name>
    <name type="synonym">FAM92A</name>
    <name type="synonym">FAM92A1</name>
</gene>
<protein>
    <recommendedName>
        <fullName evidence="15">CBY1-interacting BAR domain-containing protein 1</fullName>
    </recommendedName>
</protein>